<reference key="1">
    <citation type="journal article" date="2007" name="Genome Biol.">
        <title>Comparison of Francisella tularensis genomes reveals evolutionary events associated with the emergence of human pathogenic strains.</title>
        <authorList>
            <person name="Rohmer L."/>
            <person name="Fong C."/>
            <person name="Abmayr S."/>
            <person name="Wasnick M."/>
            <person name="Larson Freeman T.J."/>
            <person name="Radey M."/>
            <person name="Guina T."/>
            <person name="Svensson K."/>
            <person name="Hayden H.S."/>
            <person name="Jacobs M."/>
            <person name="Gallagher L.A."/>
            <person name="Manoil C."/>
            <person name="Ernst R.K."/>
            <person name="Drees B."/>
            <person name="Buckley D."/>
            <person name="Haugen E."/>
            <person name="Bovee D."/>
            <person name="Zhou Y."/>
            <person name="Chang J."/>
            <person name="Levy R."/>
            <person name="Lim R."/>
            <person name="Gillett W."/>
            <person name="Guenthener D."/>
            <person name="Kang A."/>
            <person name="Shaffer S.A."/>
            <person name="Taylor G."/>
            <person name="Chen J."/>
            <person name="Gallis B."/>
            <person name="D'Argenio D.A."/>
            <person name="Forsman M."/>
            <person name="Olson M.V."/>
            <person name="Goodlett D.R."/>
            <person name="Kaul R."/>
            <person name="Miller S.I."/>
            <person name="Brittnacher M.J."/>
        </authorList>
    </citation>
    <scope>NUCLEOTIDE SEQUENCE [LARGE SCALE GENOMIC DNA]</scope>
    <source>
        <strain>U112</strain>
    </source>
</reference>
<protein>
    <recommendedName>
        <fullName evidence="1">Iron-sulfur cluster insertion protein ErpA</fullName>
    </recommendedName>
</protein>
<name>ERPA_FRATN</name>
<feature type="chain" id="PRO_0000311484" description="Iron-sulfur cluster insertion protein ErpA">
    <location>
        <begin position="1"/>
        <end position="116"/>
    </location>
</feature>
<feature type="binding site" evidence="1">
    <location>
        <position position="44"/>
    </location>
    <ligand>
        <name>iron-sulfur cluster</name>
        <dbReference type="ChEBI" id="CHEBI:30408"/>
    </ligand>
</feature>
<feature type="binding site" evidence="1">
    <location>
        <position position="108"/>
    </location>
    <ligand>
        <name>iron-sulfur cluster</name>
        <dbReference type="ChEBI" id="CHEBI:30408"/>
    </ligand>
</feature>
<feature type="binding site" evidence="1">
    <location>
        <position position="110"/>
    </location>
    <ligand>
        <name>iron-sulfur cluster</name>
        <dbReference type="ChEBI" id="CHEBI:30408"/>
    </ligand>
</feature>
<proteinExistence type="inferred from homology"/>
<accession>A0Q5J0</accession>
<keyword id="KW-0408">Iron</keyword>
<keyword id="KW-0411">Iron-sulfur</keyword>
<keyword id="KW-0479">Metal-binding</keyword>
<evidence type="ECO:0000255" key="1">
    <source>
        <dbReference type="HAMAP-Rule" id="MF_01380"/>
    </source>
</evidence>
<gene>
    <name evidence="1" type="primary">erpA</name>
    <name type="ordered locus">FTN_0610</name>
</gene>
<comment type="function">
    <text evidence="1">Required for insertion of 4Fe-4S clusters for at least IspG.</text>
</comment>
<comment type="cofactor">
    <cofactor evidence="1">
        <name>iron-sulfur cluster</name>
        <dbReference type="ChEBI" id="CHEBI:30408"/>
    </cofactor>
    <text evidence="1">Binds 1 iron-sulfur cluster per subunit.</text>
</comment>
<comment type="subunit">
    <text evidence="1">Homodimer.</text>
</comment>
<comment type="similarity">
    <text evidence="1">Belongs to the HesB/IscA family.</text>
</comment>
<dbReference type="EMBL" id="CP000439">
    <property type="protein sequence ID" value="ABK89505.1"/>
    <property type="molecule type" value="Genomic_DNA"/>
</dbReference>
<dbReference type="RefSeq" id="WP_003016875.1">
    <property type="nucleotide sequence ID" value="NZ_CP009633.1"/>
</dbReference>
<dbReference type="SMR" id="A0Q5J0"/>
<dbReference type="GeneID" id="75263905"/>
<dbReference type="KEGG" id="ftn:FTN_0610"/>
<dbReference type="KEGG" id="ftx:AW25_1418"/>
<dbReference type="BioCyc" id="FTUL401614:G1G75-635-MONOMER"/>
<dbReference type="Proteomes" id="UP000000762">
    <property type="component" value="Chromosome"/>
</dbReference>
<dbReference type="GO" id="GO:0051537">
    <property type="term" value="F:2 iron, 2 sulfur cluster binding"/>
    <property type="evidence" value="ECO:0007669"/>
    <property type="project" value="UniProtKB-ARBA"/>
</dbReference>
<dbReference type="GO" id="GO:0051539">
    <property type="term" value="F:4 iron, 4 sulfur cluster binding"/>
    <property type="evidence" value="ECO:0007669"/>
    <property type="project" value="TreeGrafter"/>
</dbReference>
<dbReference type="GO" id="GO:0005506">
    <property type="term" value="F:iron ion binding"/>
    <property type="evidence" value="ECO:0007669"/>
    <property type="project" value="UniProtKB-UniRule"/>
</dbReference>
<dbReference type="GO" id="GO:0016226">
    <property type="term" value="P:iron-sulfur cluster assembly"/>
    <property type="evidence" value="ECO:0007669"/>
    <property type="project" value="UniProtKB-UniRule"/>
</dbReference>
<dbReference type="FunFam" id="2.60.300.12:FF:000002">
    <property type="entry name" value="Iron-sulfur cluster insertion protein ErpA"/>
    <property type="match status" value="1"/>
</dbReference>
<dbReference type="Gene3D" id="2.60.300.12">
    <property type="entry name" value="HesB-like domain"/>
    <property type="match status" value="1"/>
</dbReference>
<dbReference type="HAMAP" id="MF_01380">
    <property type="entry name" value="Fe_S_insert_ErpA"/>
    <property type="match status" value="1"/>
</dbReference>
<dbReference type="InterPro" id="IPR000361">
    <property type="entry name" value="FeS_biogenesis"/>
</dbReference>
<dbReference type="InterPro" id="IPR016092">
    <property type="entry name" value="FeS_cluster_insertion"/>
</dbReference>
<dbReference type="InterPro" id="IPR017870">
    <property type="entry name" value="FeS_cluster_insertion_CS"/>
</dbReference>
<dbReference type="InterPro" id="IPR023063">
    <property type="entry name" value="FeS_cluster_insertion_RrpA"/>
</dbReference>
<dbReference type="InterPro" id="IPR035903">
    <property type="entry name" value="HesB-like_dom_sf"/>
</dbReference>
<dbReference type="NCBIfam" id="TIGR00049">
    <property type="entry name" value="iron-sulfur cluster assembly accessory protein"/>
    <property type="match status" value="1"/>
</dbReference>
<dbReference type="NCBIfam" id="NF010147">
    <property type="entry name" value="PRK13623.1"/>
    <property type="match status" value="1"/>
</dbReference>
<dbReference type="PANTHER" id="PTHR43011">
    <property type="entry name" value="IRON-SULFUR CLUSTER ASSEMBLY 2 HOMOLOG, MITOCHONDRIAL"/>
    <property type="match status" value="1"/>
</dbReference>
<dbReference type="PANTHER" id="PTHR43011:SF1">
    <property type="entry name" value="IRON-SULFUR CLUSTER ASSEMBLY 2 HOMOLOG, MITOCHONDRIAL"/>
    <property type="match status" value="1"/>
</dbReference>
<dbReference type="Pfam" id="PF01521">
    <property type="entry name" value="Fe-S_biosyn"/>
    <property type="match status" value="1"/>
</dbReference>
<dbReference type="SUPFAM" id="SSF89360">
    <property type="entry name" value="HesB-like domain"/>
    <property type="match status" value="1"/>
</dbReference>
<dbReference type="PROSITE" id="PS01152">
    <property type="entry name" value="HESB"/>
    <property type="match status" value="1"/>
</dbReference>
<sequence length="116" mass="12658">MSEVVQSVDPINFTEAASLKVKELIEEEGDNSLSLRVYITGGGCSGFQYAFAFDNEVKEDDMVITKNGVRLLVDSMSFQYLVGADVDYKDDVEGAYFVIRNPNAKTTCGCGSSFSV</sequence>
<organism>
    <name type="scientific">Francisella tularensis subsp. novicida (strain U112)</name>
    <dbReference type="NCBI Taxonomy" id="401614"/>
    <lineage>
        <taxon>Bacteria</taxon>
        <taxon>Pseudomonadati</taxon>
        <taxon>Pseudomonadota</taxon>
        <taxon>Gammaproteobacteria</taxon>
        <taxon>Thiotrichales</taxon>
        <taxon>Francisellaceae</taxon>
        <taxon>Francisella</taxon>
    </lineage>
</organism>